<evidence type="ECO:0000255" key="1">
    <source>
        <dbReference type="HAMAP-Rule" id="MF_01192"/>
    </source>
</evidence>
<evidence type="ECO:0000305" key="2"/>
<gene>
    <name evidence="1" type="primary">xni</name>
    <name evidence="1" type="synonym">ygdG</name>
    <name type="ordered locus">PBPRA2986</name>
</gene>
<proteinExistence type="inferred from homology"/>
<keyword id="KW-0238">DNA-binding</keyword>
<keyword id="KW-0255">Endonuclease</keyword>
<keyword id="KW-0378">Hydrolase</keyword>
<keyword id="KW-0460">Magnesium</keyword>
<keyword id="KW-0479">Metal-binding</keyword>
<keyword id="KW-0540">Nuclease</keyword>
<keyword id="KW-0630">Potassium</keyword>
<keyword id="KW-1185">Reference proteome</keyword>
<protein>
    <recommendedName>
        <fullName evidence="1">Flap endonuclease Xni</fullName>
        <shortName evidence="1">FEN</shortName>
        <ecNumber evidence="1">3.1.-.-</ecNumber>
    </recommendedName>
</protein>
<accession>Q6LN06</accession>
<reference key="1">
    <citation type="journal article" date="2005" name="Science">
        <title>Life at depth: Photobacterium profundum genome sequence and expression analysis.</title>
        <authorList>
            <person name="Vezzi A."/>
            <person name="Campanaro S."/>
            <person name="D'Angelo M."/>
            <person name="Simonato F."/>
            <person name="Vitulo N."/>
            <person name="Lauro F.M."/>
            <person name="Cestaro A."/>
            <person name="Malacrida G."/>
            <person name="Simionati B."/>
            <person name="Cannata N."/>
            <person name="Romualdi C."/>
            <person name="Bartlett D.H."/>
            <person name="Valle G."/>
        </authorList>
    </citation>
    <scope>NUCLEOTIDE SEQUENCE [LARGE SCALE GENOMIC DNA]</scope>
    <source>
        <strain>ATCC BAA-1253 / SS9</strain>
    </source>
</reference>
<dbReference type="EC" id="3.1.-.-" evidence="1"/>
<dbReference type="EMBL" id="CR378672">
    <property type="protein sequence ID" value="CAG21320.1"/>
    <property type="status" value="ALT_INIT"/>
    <property type="molecule type" value="Genomic_DNA"/>
</dbReference>
<dbReference type="RefSeq" id="WP_041394496.1">
    <property type="nucleotide sequence ID" value="NC_006370.1"/>
</dbReference>
<dbReference type="SMR" id="Q6LN06"/>
<dbReference type="STRING" id="298386.PBPRA2986"/>
<dbReference type="KEGG" id="ppr:PBPRA2986"/>
<dbReference type="eggNOG" id="COG0258">
    <property type="taxonomic scope" value="Bacteria"/>
</dbReference>
<dbReference type="HOGENOM" id="CLU_004675_1_2_6"/>
<dbReference type="Proteomes" id="UP000000593">
    <property type="component" value="Chromosome 1"/>
</dbReference>
<dbReference type="GO" id="GO:0008409">
    <property type="term" value="F:5'-3' exonuclease activity"/>
    <property type="evidence" value="ECO:0007669"/>
    <property type="project" value="InterPro"/>
</dbReference>
<dbReference type="GO" id="GO:0017108">
    <property type="term" value="F:5'-flap endonuclease activity"/>
    <property type="evidence" value="ECO:0007669"/>
    <property type="project" value="UniProtKB-UniRule"/>
</dbReference>
<dbReference type="GO" id="GO:0003677">
    <property type="term" value="F:DNA binding"/>
    <property type="evidence" value="ECO:0007669"/>
    <property type="project" value="UniProtKB-UniRule"/>
</dbReference>
<dbReference type="GO" id="GO:0000287">
    <property type="term" value="F:magnesium ion binding"/>
    <property type="evidence" value="ECO:0007669"/>
    <property type="project" value="UniProtKB-UniRule"/>
</dbReference>
<dbReference type="GO" id="GO:0030955">
    <property type="term" value="F:potassium ion binding"/>
    <property type="evidence" value="ECO:0007669"/>
    <property type="project" value="UniProtKB-UniRule"/>
</dbReference>
<dbReference type="GO" id="GO:0033567">
    <property type="term" value="P:DNA replication, Okazaki fragment processing"/>
    <property type="evidence" value="ECO:0007669"/>
    <property type="project" value="UniProtKB-UniRule"/>
</dbReference>
<dbReference type="CDD" id="cd09898">
    <property type="entry name" value="H3TH_53EXO"/>
    <property type="match status" value="1"/>
</dbReference>
<dbReference type="CDD" id="cd09859">
    <property type="entry name" value="PIN_53EXO"/>
    <property type="match status" value="1"/>
</dbReference>
<dbReference type="FunFam" id="1.10.150.20:FF:000003">
    <property type="entry name" value="DNA polymerase I"/>
    <property type="match status" value="1"/>
</dbReference>
<dbReference type="Gene3D" id="1.10.150.20">
    <property type="entry name" value="5' to 3' exonuclease, C-terminal subdomain"/>
    <property type="match status" value="1"/>
</dbReference>
<dbReference type="Gene3D" id="3.40.50.1010">
    <property type="entry name" value="5'-nuclease"/>
    <property type="match status" value="1"/>
</dbReference>
<dbReference type="HAMAP" id="MF_01192">
    <property type="entry name" value="Xni"/>
    <property type="match status" value="1"/>
</dbReference>
<dbReference type="InterPro" id="IPR020046">
    <property type="entry name" value="5-3_exonucl_a-hlix_arch_N"/>
</dbReference>
<dbReference type="InterPro" id="IPR002421">
    <property type="entry name" value="5-3_exonuclease"/>
</dbReference>
<dbReference type="InterPro" id="IPR036279">
    <property type="entry name" value="5-3_exonuclease_C_sf"/>
</dbReference>
<dbReference type="InterPro" id="IPR020045">
    <property type="entry name" value="DNA_polI_H3TH"/>
</dbReference>
<dbReference type="InterPro" id="IPR038969">
    <property type="entry name" value="FEN"/>
</dbReference>
<dbReference type="InterPro" id="IPR008918">
    <property type="entry name" value="HhH2"/>
</dbReference>
<dbReference type="InterPro" id="IPR029060">
    <property type="entry name" value="PIN-like_dom_sf"/>
</dbReference>
<dbReference type="InterPro" id="IPR022895">
    <property type="entry name" value="Xni"/>
</dbReference>
<dbReference type="NCBIfam" id="NF007017">
    <property type="entry name" value="PRK09482.1"/>
    <property type="match status" value="1"/>
</dbReference>
<dbReference type="PANTHER" id="PTHR42646:SF2">
    <property type="entry name" value="5'-3' EXONUCLEASE FAMILY PROTEIN"/>
    <property type="match status" value="1"/>
</dbReference>
<dbReference type="PANTHER" id="PTHR42646">
    <property type="entry name" value="FLAP ENDONUCLEASE XNI"/>
    <property type="match status" value="1"/>
</dbReference>
<dbReference type="Pfam" id="PF01367">
    <property type="entry name" value="5_3_exonuc"/>
    <property type="match status" value="1"/>
</dbReference>
<dbReference type="Pfam" id="PF02739">
    <property type="entry name" value="5_3_exonuc_N"/>
    <property type="match status" value="1"/>
</dbReference>
<dbReference type="SMART" id="SM00475">
    <property type="entry name" value="53EXOc"/>
    <property type="match status" value="1"/>
</dbReference>
<dbReference type="SMART" id="SM00279">
    <property type="entry name" value="HhH2"/>
    <property type="match status" value="1"/>
</dbReference>
<dbReference type="SUPFAM" id="SSF47807">
    <property type="entry name" value="5' to 3' exonuclease, C-terminal subdomain"/>
    <property type="match status" value="1"/>
</dbReference>
<dbReference type="SUPFAM" id="SSF88723">
    <property type="entry name" value="PIN domain-like"/>
    <property type="match status" value="1"/>
</dbReference>
<organism>
    <name type="scientific">Photobacterium profundum (strain SS9)</name>
    <dbReference type="NCBI Taxonomy" id="298386"/>
    <lineage>
        <taxon>Bacteria</taxon>
        <taxon>Pseudomonadati</taxon>
        <taxon>Pseudomonadota</taxon>
        <taxon>Gammaproteobacteria</taxon>
        <taxon>Vibrionales</taxon>
        <taxon>Vibrionaceae</taxon>
        <taxon>Photobacterium</taxon>
    </lineage>
</organism>
<feature type="chain" id="PRO_0000297865" description="Flap endonuclease Xni">
    <location>
        <begin position="1"/>
        <end position="258"/>
    </location>
</feature>
<feature type="domain" description="5'-3' exonuclease" evidence="1">
    <location>
        <begin position="165"/>
        <end position="254"/>
    </location>
</feature>
<feature type="region of interest" description="Interaction with DNA" evidence="1">
    <location>
        <begin position="189"/>
        <end position="194"/>
    </location>
</feature>
<feature type="binding site" evidence="1">
    <location>
        <position position="109"/>
    </location>
    <ligand>
        <name>Mg(2+)</name>
        <dbReference type="ChEBI" id="CHEBI:18420"/>
    </ligand>
</feature>
<feature type="binding site" evidence="1">
    <location>
        <position position="176"/>
    </location>
    <ligand>
        <name>K(+)</name>
        <dbReference type="ChEBI" id="CHEBI:29103"/>
    </ligand>
</feature>
<feature type="binding site" evidence="1">
    <location>
        <position position="177"/>
    </location>
    <ligand>
        <name>K(+)</name>
        <dbReference type="ChEBI" id="CHEBI:29103"/>
    </ligand>
</feature>
<feature type="binding site" evidence="1">
    <location>
        <position position="185"/>
    </location>
    <ligand>
        <name>K(+)</name>
        <dbReference type="ChEBI" id="CHEBI:29103"/>
    </ligand>
</feature>
<feature type="binding site" evidence="1">
    <location>
        <position position="187"/>
    </location>
    <ligand>
        <name>K(+)</name>
        <dbReference type="ChEBI" id="CHEBI:29103"/>
    </ligand>
</feature>
<feature type="binding site" evidence="1">
    <location>
        <position position="190"/>
    </location>
    <ligand>
        <name>K(+)</name>
        <dbReference type="ChEBI" id="CHEBI:29103"/>
    </ligand>
</feature>
<sequence length="258" mass="28744">MTIHLVVIDALNLIRRVHAAQPGEPDVKNTARVCCQALSKIIKFSEPSHIVAVFDHHGDDRGWRAKLLPHYKEGRKPMPPELQAGMEIIQDAFMDLGIDSLLSDGDEADDLVATLALKVASRHQQVTIISTDKGYCQLLSPTLRVRDYFQQRWLDSPFVEKEYGVKPEQLPDYWGLAGISSSKIPGIPGIGPKAALELLSLYPDLDTILQAEDLPTKWQKKITKHRESAEASKKVASLKTDLTLGFNLQDIRYLAPSS</sequence>
<name>XNI_PHOPR</name>
<comment type="function">
    <text evidence="1">Has flap endonuclease activity. During DNA replication, flap endonucleases cleave the 5'-overhanging flap structure that is generated by displacement synthesis when DNA polymerase encounters the 5'-end of a downstream Okazaki fragment.</text>
</comment>
<comment type="cofactor">
    <cofactor evidence="1">
        <name>Mg(2+)</name>
        <dbReference type="ChEBI" id="CHEBI:18420"/>
    </cofactor>
    <text evidence="1">Binds 2 Mg(2+) per subunit. Only one magnesium ion has a direct interaction with the protein, the other interactions are indirect.</text>
</comment>
<comment type="cofactor">
    <cofactor evidence="1">
        <name>K(+)</name>
        <dbReference type="ChEBI" id="CHEBI:29103"/>
    </cofactor>
    <text evidence="1">Binds 1 K(+) per subunit. The potassium ion strongly increases the affinity for DNA.</text>
</comment>
<comment type="similarity">
    <text evidence="1">Belongs to the Xni family.</text>
</comment>
<comment type="sequence caution" evidence="2">
    <conflict type="erroneous initiation">
        <sequence resource="EMBL-CDS" id="CAG21320"/>
    </conflict>
    <text>Extended N-terminus.</text>
</comment>